<proteinExistence type="inferred from homology"/>
<name>RIBB_SALPC</name>
<feature type="chain" id="PRO_1000193758" description="3,4-dihydroxy-2-butanone 4-phosphate synthase">
    <location>
        <begin position="1"/>
        <end position="217"/>
    </location>
</feature>
<feature type="binding site" evidence="1">
    <location>
        <begin position="37"/>
        <end position="38"/>
    </location>
    <ligand>
        <name>D-ribulose 5-phosphate</name>
        <dbReference type="ChEBI" id="CHEBI:58121"/>
    </ligand>
</feature>
<feature type="binding site" evidence="1">
    <location>
        <position position="38"/>
    </location>
    <ligand>
        <name>Mg(2+)</name>
        <dbReference type="ChEBI" id="CHEBI:18420"/>
        <label>1</label>
    </ligand>
</feature>
<feature type="binding site" evidence="1">
    <location>
        <position position="38"/>
    </location>
    <ligand>
        <name>Mg(2+)</name>
        <dbReference type="ChEBI" id="CHEBI:18420"/>
        <label>2</label>
    </ligand>
</feature>
<feature type="binding site" evidence="1">
    <location>
        <position position="42"/>
    </location>
    <ligand>
        <name>D-ribulose 5-phosphate</name>
        <dbReference type="ChEBI" id="CHEBI:58121"/>
    </ligand>
</feature>
<feature type="binding site" evidence="1">
    <location>
        <begin position="150"/>
        <end position="154"/>
    </location>
    <ligand>
        <name>D-ribulose 5-phosphate</name>
        <dbReference type="ChEBI" id="CHEBI:58121"/>
    </ligand>
</feature>
<feature type="binding site" evidence="1">
    <location>
        <position position="153"/>
    </location>
    <ligand>
        <name>Mg(2+)</name>
        <dbReference type="ChEBI" id="CHEBI:18420"/>
        <label>2</label>
    </ligand>
</feature>
<feature type="binding site" evidence="1">
    <location>
        <position position="174"/>
    </location>
    <ligand>
        <name>D-ribulose 5-phosphate</name>
        <dbReference type="ChEBI" id="CHEBI:58121"/>
    </ligand>
</feature>
<feature type="site" description="Essential for catalytic activity" evidence="1">
    <location>
        <position position="136"/>
    </location>
</feature>
<feature type="site" description="Essential for catalytic activity" evidence="1">
    <location>
        <position position="174"/>
    </location>
</feature>
<sequence>MNQTLLSSFGTPFERVELALDALREGRGVMVLDDEDRENEGDMIFPAETMTVEQMALTIRHGSGIVCLCITEDRRKQLDLPMMVENNTSAYGTGFTVTIEAAEGVTTGVSAADRVTTVRAAIKDGAKPSDLNRPGHVFPLRAQAGGVLTRGGHTEATIDLMTLAGFKPAGVLCELTNDDGTMARAPECIAFAGQHNMAVVTIEDLVAYRQAHERKAS</sequence>
<dbReference type="EC" id="4.1.99.12" evidence="1"/>
<dbReference type="EMBL" id="CP000857">
    <property type="protein sequence ID" value="ACN47356.1"/>
    <property type="molecule type" value="Genomic_DNA"/>
</dbReference>
<dbReference type="RefSeq" id="WP_001076978.1">
    <property type="nucleotide sequence ID" value="NC_012125.1"/>
</dbReference>
<dbReference type="SMR" id="C0PYW8"/>
<dbReference type="KEGG" id="sei:SPC_3271"/>
<dbReference type="HOGENOM" id="CLU_020273_3_0_6"/>
<dbReference type="UniPathway" id="UPA00275">
    <property type="reaction ID" value="UER00399"/>
</dbReference>
<dbReference type="Proteomes" id="UP000001599">
    <property type="component" value="Chromosome"/>
</dbReference>
<dbReference type="GO" id="GO:0005829">
    <property type="term" value="C:cytosol"/>
    <property type="evidence" value="ECO:0007669"/>
    <property type="project" value="TreeGrafter"/>
</dbReference>
<dbReference type="GO" id="GO:0008686">
    <property type="term" value="F:3,4-dihydroxy-2-butanone-4-phosphate synthase activity"/>
    <property type="evidence" value="ECO:0007669"/>
    <property type="project" value="UniProtKB-UniRule"/>
</dbReference>
<dbReference type="GO" id="GO:0000287">
    <property type="term" value="F:magnesium ion binding"/>
    <property type="evidence" value="ECO:0007669"/>
    <property type="project" value="UniProtKB-UniRule"/>
</dbReference>
<dbReference type="GO" id="GO:0030145">
    <property type="term" value="F:manganese ion binding"/>
    <property type="evidence" value="ECO:0007669"/>
    <property type="project" value="UniProtKB-UniRule"/>
</dbReference>
<dbReference type="GO" id="GO:0009231">
    <property type="term" value="P:riboflavin biosynthetic process"/>
    <property type="evidence" value="ECO:0007669"/>
    <property type="project" value="UniProtKB-UniRule"/>
</dbReference>
<dbReference type="FunFam" id="3.90.870.10:FF:000002">
    <property type="entry name" value="3,4-dihydroxy-2-butanone 4-phosphate synthase"/>
    <property type="match status" value="1"/>
</dbReference>
<dbReference type="Gene3D" id="3.90.870.10">
    <property type="entry name" value="DHBP synthase"/>
    <property type="match status" value="1"/>
</dbReference>
<dbReference type="HAMAP" id="MF_00180">
    <property type="entry name" value="RibB"/>
    <property type="match status" value="1"/>
</dbReference>
<dbReference type="InterPro" id="IPR017945">
    <property type="entry name" value="DHBP_synth_RibB-like_a/b_dom"/>
</dbReference>
<dbReference type="InterPro" id="IPR000422">
    <property type="entry name" value="DHBP_synthase_RibB"/>
</dbReference>
<dbReference type="NCBIfam" id="TIGR00506">
    <property type="entry name" value="ribB"/>
    <property type="match status" value="1"/>
</dbReference>
<dbReference type="PANTHER" id="PTHR21327:SF38">
    <property type="entry name" value="3,4-DIHYDROXY-2-BUTANONE 4-PHOSPHATE SYNTHASE"/>
    <property type="match status" value="1"/>
</dbReference>
<dbReference type="PANTHER" id="PTHR21327">
    <property type="entry name" value="GTP CYCLOHYDROLASE II-RELATED"/>
    <property type="match status" value="1"/>
</dbReference>
<dbReference type="Pfam" id="PF00926">
    <property type="entry name" value="DHBP_synthase"/>
    <property type="match status" value="1"/>
</dbReference>
<dbReference type="SUPFAM" id="SSF55821">
    <property type="entry name" value="YrdC/RibB"/>
    <property type="match status" value="1"/>
</dbReference>
<comment type="function">
    <text evidence="1">Catalyzes the conversion of D-ribulose 5-phosphate to formate and 3,4-dihydroxy-2-butanone 4-phosphate.</text>
</comment>
<comment type="catalytic activity">
    <reaction evidence="1">
        <text>D-ribulose 5-phosphate = (2S)-2-hydroxy-3-oxobutyl phosphate + formate + H(+)</text>
        <dbReference type="Rhea" id="RHEA:18457"/>
        <dbReference type="ChEBI" id="CHEBI:15378"/>
        <dbReference type="ChEBI" id="CHEBI:15740"/>
        <dbReference type="ChEBI" id="CHEBI:58121"/>
        <dbReference type="ChEBI" id="CHEBI:58830"/>
        <dbReference type="EC" id="4.1.99.12"/>
    </reaction>
</comment>
<comment type="cofactor">
    <cofactor evidence="1">
        <name>Mg(2+)</name>
        <dbReference type="ChEBI" id="CHEBI:18420"/>
    </cofactor>
    <cofactor evidence="1">
        <name>Mn(2+)</name>
        <dbReference type="ChEBI" id="CHEBI:29035"/>
    </cofactor>
    <text evidence="1">Binds 2 divalent metal cations per subunit. Magnesium or manganese.</text>
</comment>
<comment type="pathway">
    <text evidence="1">Cofactor biosynthesis; riboflavin biosynthesis; 2-hydroxy-3-oxobutyl phosphate from D-ribulose 5-phosphate: step 1/1.</text>
</comment>
<comment type="subunit">
    <text evidence="1">Homodimer.</text>
</comment>
<comment type="similarity">
    <text evidence="1">Belongs to the DHBP synthase family.</text>
</comment>
<reference key="1">
    <citation type="journal article" date="2009" name="PLoS ONE">
        <title>Salmonella paratyphi C: genetic divergence from Salmonella choleraesuis and pathogenic convergence with Salmonella typhi.</title>
        <authorList>
            <person name="Liu W.-Q."/>
            <person name="Feng Y."/>
            <person name="Wang Y."/>
            <person name="Zou Q.-H."/>
            <person name="Chen F."/>
            <person name="Guo J.-T."/>
            <person name="Peng Y.-H."/>
            <person name="Jin Y."/>
            <person name="Li Y.-G."/>
            <person name="Hu S.-N."/>
            <person name="Johnston R.N."/>
            <person name="Liu G.-R."/>
            <person name="Liu S.-L."/>
        </authorList>
    </citation>
    <scope>NUCLEOTIDE SEQUENCE [LARGE SCALE GENOMIC DNA]</scope>
    <source>
        <strain>RKS4594</strain>
    </source>
</reference>
<gene>
    <name evidence="1" type="primary">ribB</name>
    <name type="ordered locus">SPC_3271</name>
</gene>
<protein>
    <recommendedName>
        <fullName evidence="1">3,4-dihydroxy-2-butanone 4-phosphate synthase</fullName>
        <shortName evidence="1">DHBP synthase</shortName>
        <ecNumber evidence="1">4.1.99.12</ecNumber>
    </recommendedName>
</protein>
<keyword id="KW-0456">Lyase</keyword>
<keyword id="KW-0460">Magnesium</keyword>
<keyword id="KW-0464">Manganese</keyword>
<keyword id="KW-0479">Metal-binding</keyword>
<keyword id="KW-0686">Riboflavin biosynthesis</keyword>
<evidence type="ECO:0000255" key="1">
    <source>
        <dbReference type="HAMAP-Rule" id="MF_00180"/>
    </source>
</evidence>
<accession>C0PYW8</accession>
<organism>
    <name type="scientific">Salmonella paratyphi C (strain RKS4594)</name>
    <dbReference type="NCBI Taxonomy" id="476213"/>
    <lineage>
        <taxon>Bacteria</taxon>
        <taxon>Pseudomonadati</taxon>
        <taxon>Pseudomonadota</taxon>
        <taxon>Gammaproteobacteria</taxon>
        <taxon>Enterobacterales</taxon>
        <taxon>Enterobacteriaceae</taxon>
        <taxon>Salmonella</taxon>
    </lineage>
</organism>